<feature type="chain" id="PRO_0000337649" description="2,3-dihydroxyphenylpropionate/2,3-dihydroxicinnamic acid 1,2-dioxygenase 2">
    <location>
        <begin position="1"/>
        <end position="317"/>
    </location>
</feature>
<feature type="active site" description="Proton donor" evidence="1">
    <location>
        <position position="115"/>
    </location>
</feature>
<feature type="active site" description="Proton acceptor" evidence="1">
    <location>
        <position position="179"/>
    </location>
</feature>
<dbReference type="EC" id="1.13.11.16" evidence="1"/>
<dbReference type="EMBL" id="CP000089">
    <property type="protein sequence ID" value="AAZ46102.1"/>
    <property type="molecule type" value="Genomic_DNA"/>
</dbReference>
<dbReference type="SMR" id="Q47GC9"/>
<dbReference type="STRING" id="159087.Daro_1353"/>
<dbReference type="KEGG" id="dar:Daro_1353"/>
<dbReference type="eggNOG" id="COG3384">
    <property type="taxonomic scope" value="Bacteria"/>
</dbReference>
<dbReference type="HOGENOM" id="CLU_078149_0_0_4"/>
<dbReference type="OrthoDB" id="8673673at2"/>
<dbReference type="UniPathway" id="UPA00714"/>
<dbReference type="GO" id="GO:0047070">
    <property type="term" value="F:3-carboxyethylcatechol 2,3-dioxygenase activity"/>
    <property type="evidence" value="ECO:0007669"/>
    <property type="project" value="UniProtKB-UniRule"/>
</dbReference>
<dbReference type="GO" id="GO:0008198">
    <property type="term" value="F:ferrous iron binding"/>
    <property type="evidence" value="ECO:0007669"/>
    <property type="project" value="InterPro"/>
</dbReference>
<dbReference type="GO" id="GO:0019380">
    <property type="term" value="P:3-phenylpropionate catabolic process"/>
    <property type="evidence" value="ECO:0007669"/>
    <property type="project" value="UniProtKB-UniRule"/>
</dbReference>
<dbReference type="CDD" id="cd07365">
    <property type="entry name" value="MhpB_like"/>
    <property type="match status" value="1"/>
</dbReference>
<dbReference type="Gene3D" id="3.40.830.10">
    <property type="entry name" value="LigB-like"/>
    <property type="match status" value="1"/>
</dbReference>
<dbReference type="HAMAP" id="MF_01653">
    <property type="entry name" value="MhpB"/>
    <property type="match status" value="1"/>
</dbReference>
<dbReference type="InterPro" id="IPR023789">
    <property type="entry name" value="DHPP/DHXA_dioxygenase"/>
</dbReference>
<dbReference type="InterPro" id="IPR004183">
    <property type="entry name" value="Xdiol_dOase_suB"/>
</dbReference>
<dbReference type="NCBIfam" id="NF009908">
    <property type="entry name" value="PRK13370.1-2"/>
    <property type="match status" value="1"/>
</dbReference>
<dbReference type="NCBIfam" id="NF009910">
    <property type="entry name" value="PRK13370.1-4"/>
    <property type="match status" value="1"/>
</dbReference>
<dbReference type="Pfam" id="PF02900">
    <property type="entry name" value="LigB"/>
    <property type="match status" value="1"/>
</dbReference>
<dbReference type="SUPFAM" id="SSF53213">
    <property type="entry name" value="LigB-like"/>
    <property type="match status" value="1"/>
</dbReference>
<comment type="function">
    <text evidence="1">Catalyzes the non-heme iron(II)-dependent oxidative cleavage of 2,3-dihydroxyphenylpropionic acid and 2,3-dihydroxicinnamic acid into 2-hydroxy-6-ketononadienedioate and 2-hydroxy-6-ketononatrienedioate, respectively.</text>
</comment>
<comment type="catalytic activity">
    <reaction evidence="1">
        <text>3-(2,3-dihydroxyphenyl)propanoate + O2 = (2Z,4E)-2-hydroxy-6-oxonona-2,4-dienedioate + H(+)</text>
        <dbReference type="Rhea" id="RHEA:23840"/>
        <dbReference type="ChEBI" id="CHEBI:15378"/>
        <dbReference type="ChEBI" id="CHEBI:15379"/>
        <dbReference type="ChEBI" id="CHEBI:46951"/>
        <dbReference type="ChEBI" id="CHEBI:66887"/>
        <dbReference type="EC" id="1.13.11.16"/>
    </reaction>
</comment>
<comment type="catalytic activity">
    <reaction evidence="1">
        <text>(2E)-3-(2,3-dihydroxyphenyl)prop-2-enoate + O2 = (2Z,4E,7E)-2-hydroxy-6-oxonona-2,4,7-trienedioate + H(+)</text>
        <dbReference type="Rhea" id="RHEA:25054"/>
        <dbReference type="ChEBI" id="CHEBI:15378"/>
        <dbReference type="ChEBI" id="CHEBI:15379"/>
        <dbReference type="ChEBI" id="CHEBI:58642"/>
        <dbReference type="ChEBI" id="CHEBI:66888"/>
        <dbReference type="EC" id="1.13.11.16"/>
    </reaction>
</comment>
<comment type="cofactor">
    <cofactor evidence="1">
        <name>Fe(2+)</name>
        <dbReference type="ChEBI" id="CHEBI:29033"/>
    </cofactor>
</comment>
<comment type="pathway">
    <text evidence="1">Aromatic compound metabolism; 3-phenylpropanoate degradation.</text>
</comment>
<comment type="subunit">
    <text evidence="1">Homotetramer.</text>
</comment>
<comment type="similarity">
    <text evidence="1">Belongs to the LigB/MhpB extradiol dioxygenase family.</text>
</comment>
<keyword id="KW-0058">Aromatic hydrocarbons catabolism</keyword>
<keyword id="KW-0223">Dioxygenase</keyword>
<keyword id="KW-0408">Iron</keyword>
<keyword id="KW-0560">Oxidoreductase</keyword>
<accession>Q47GC9</accession>
<evidence type="ECO:0000255" key="1">
    <source>
        <dbReference type="HAMAP-Rule" id="MF_01653"/>
    </source>
</evidence>
<reference key="1">
    <citation type="journal article" date="2009" name="BMC Genomics">
        <title>Metabolic analysis of the soil microbe Dechloromonas aromatica str. RCB: indications of a surprisingly complex life-style and cryptic anaerobic pathways for aromatic degradation.</title>
        <authorList>
            <person name="Salinero K.K."/>
            <person name="Keller K."/>
            <person name="Feil W.S."/>
            <person name="Feil H."/>
            <person name="Trong S."/>
            <person name="Di Bartolo G."/>
            <person name="Lapidus A."/>
        </authorList>
    </citation>
    <scope>NUCLEOTIDE SEQUENCE [LARGE SCALE GENOMIC DNA]</scope>
    <source>
        <strain>RCB</strain>
    </source>
</reference>
<sequence>MAALLQCISHSPMKGYVDPSPAIVSDVEVAIARMRKELVDFDPEVIFLFAPDHYNGFFLDVMPQFCVGIAATSVGDYRTTPGPINVPREIARSCAEHLISNDIDVAISYRMQVDHGMVQPLEELMGGLNAYPVVPLFVNGVAPPLISIRRARLFGAAVGEYAKKLNKRCLFIGSGGLSHNPPVPQIDTATEEFAEFLIAGRNPSPERRAARQQRTKDAAIRFAAGDSQLHPINSVWDEAFMADLVNQDWGALDAYRNSEITEQAGISTHEAKSWVAAHAAMNAATSGGYMAEVRYYKAIPEWIVGYGAMAGSAEQAT</sequence>
<proteinExistence type="inferred from homology"/>
<protein>
    <recommendedName>
        <fullName evidence="1">2,3-dihydroxyphenylpropionate/2,3-dihydroxicinnamic acid 1,2-dioxygenase 2</fullName>
        <ecNumber evidence="1">1.13.11.16</ecNumber>
    </recommendedName>
    <alternativeName>
        <fullName evidence="1">3-carboxyethylcatechol 2,3-dioxygenase 2</fullName>
    </alternativeName>
</protein>
<gene>
    <name evidence="1" type="primary">mhpB2</name>
    <name type="ordered locus">Daro_1353</name>
</gene>
<organism>
    <name type="scientific">Dechloromonas aromatica (strain RCB)</name>
    <dbReference type="NCBI Taxonomy" id="159087"/>
    <lineage>
        <taxon>Bacteria</taxon>
        <taxon>Pseudomonadati</taxon>
        <taxon>Pseudomonadota</taxon>
        <taxon>Betaproteobacteria</taxon>
        <taxon>Rhodocyclales</taxon>
        <taxon>Azonexaceae</taxon>
        <taxon>Dechloromonas</taxon>
    </lineage>
</organism>
<name>MHPB2_DECAR</name>